<dbReference type="EMBL" id="AP001918">
    <property type="protein sequence ID" value="BAA97873.1"/>
    <property type="molecule type" value="Genomic_DNA"/>
</dbReference>
<dbReference type="RefSeq" id="NP_061382.1">
    <property type="nucleotide sequence ID" value="NC_002483.1"/>
</dbReference>
<protein>
    <recommendedName>
        <fullName>Uncharacterized protein YuaA</fullName>
    </recommendedName>
</protein>
<gene>
    <name type="primary">yuaA</name>
    <name type="synonym">yacA</name>
    <name type="ordered locus">ECOK12F003</name>
</gene>
<keyword id="KW-0614">Plasmid</keyword>
<geneLocation type="plasmid">
    <name>F</name>
</geneLocation>
<organism>
    <name type="scientific">Escherichia coli (strain K12)</name>
    <dbReference type="NCBI Taxonomy" id="83333"/>
    <lineage>
        <taxon>Bacteria</taxon>
        <taxon>Pseudomonadati</taxon>
        <taxon>Pseudomonadota</taxon>
        <taxon>Gammaproteobacteria</taxon>
        <taxon>Enterobacterales</taxon>
        <taxon>Enterobacteriaceae</taxon>
        <taxon>Escherichia</taxon>
    </lineage>
</organism>
<feature type="chain" id="PRO_0000197619" description="Uncharacterized protein YuaA">
    <location>
        <begin position="1"/>
        <end position="146"/>
    </location>
</feature>
<reference key="1">
    <citation type="submission" date="2000-04" db="EMBL/GenBank/DDBJ databases">
        <title>Complete nucleotide sequence of the F plasmid: its implications for organization and diversification of plasmid genomes.</title>
        <authorList>
            <person name="Shimizu H."/>
            <person name="Saitoh Y."/>
            <person name="Suda Y."/>
            <person name="Uehara K."/>
            <person name="Sampei G."/>
            <person name="Mizobuchi K."/>
        </authorList>
    </citation>
    <scope>NUCLEOTIDE SEQUENCE [LARGE SCALE GENOMIC DNA]</scope>
    <source>
        <strain>K12 / CR63</strain>
    </source>
</reference>
<name>YUAA_ECOLI</name>
<proteinExistence type="predicted"/>
<accession>Q9JMT9</accession>
<sequence>MAHRYLREKCFALNLNWKCKLFLTPPKSFWGTTHAYNFCPIHFLQALPSLPLSRNVEVAYGMPLIFVDVNGPSDVEVVRSFDVSTYLPLMPFSARALDFMITKSAHFSAATYCGSFSTFPAHAVIVKTVAAANNLPGFIFIPYWVY</sequence>